<dbReference type="EC" id="2.8.1.8" evidence="1"/>
<dbReference type="EMBL" id="CP001154">
    <property type="protein sequence ID" value="ACO73964.1"/>
    <property type="molecule type" value="Genomic_DNA"/>
</dbReference>
<dbReference type="RefSeq" id="WP_012696455.1">
    <property type="nucleotide sequence ID" value="NC_012559.1"/>
</dbReference>
<dbReference type="SMR" id="C1D5T3"/>
<dbReference type="STRING" id="557598.LHK_00972"/>
<dbReference type="GeneID" id="75109158"/>
<dbReference type="KEGG" id="lhk:LHK_00972"/>
<dbReference type="eggNOG" id="COG0320">
    <property type="taxonomic scope" value="Bacteria"/>
</dbReference>
<dbReference type="HOGENOM" id="CLU_033144_2_1_4"/>
<dbReference type="UniPathway" id="UPA00538">
    <property type="reaction ID" value="UER00593"/>
</dbReference>
<dbReference type="Proteomes" id="UP000002010">
    <property type="component" value="Chromosome"/>
</dbReference>
<dbReference type="GO" id="GO:0005737">
    <property type="term" value="C:cytoplasm"/>
    <property type="evidence" value="ECO:0007669"/>
    <property type="project" value="UniProtKB-SubCell"/>
</dbReference>
<dbReference type="GO" id="GO:0051539">
    <property type="term" value="F:4 iron, 4 sulfur cluster binding"/>
    <property type="evidence" value="ECO:0007669"/>
    <property type="project" value="UniProtKB-UniRule"/>
</dbReference>
<dbReference type="GO" id="GO:0016992">
    <property type="term" value="F:lipoate synthase activity"/>
    <property type="evidence" value="ECO:0007669"/>
    <property type="project" value="UniProtKB-UniRule"/>
</dbReference>
<dbReference type="GO" id="GO:0046872">
    <property type="term" value="F:metal ion binding"/>
    <property type="evidence" value="ECO:0007669"/>
    <property type="project" value="UniProtKB-KW"/>
</dbReference>
<dbReference type="CDD" id="cd01335">
    <property type="entry name" value="Radical_SAM"/>
    <property type="match status" value="1"/>
</dbReference>
<dbReference type="FunFam" id="3.20.20.70:FF:000023">
    <property type="entry name" value="Lipoyl synthase"/>
    <property type="match status" value="1"/>
</dbReference>
<dbReference type="Gene3D" id="3.20.20.70">
    <property type="entry name" value="Aldolase class I"/>
    <property type="match status" value="1"/>
</dbReference>
<dbReference type="HAMAP" id="MF_00206">
    <property type="entry name" value="Lipoyl_synth"/>
    <property type="match status" value="1"/>
</dbReference>
<dbReference type="InterPro" id="IPR013785">
    <property type="entry name" value="Aldolase_TIM"/>
</dbReference>
<dbReference type="InterPro" id="IPR006638">
    <property type="entry name" value="Elp3/MiaA/NifB-like_rSAM"/>
</dbReference>
<dbReference type="InterPro" id="IPR031691">
    <property type="entry name" value="LIAS_N"/>
</dbReference>
<dbReference type="InterPro" id="IPR003698">
    <property type="entry name" value="Lipoyl_synth"/>
</dbReference>
<dbReference type="InterPro" id="IPR007197">
    <property type="entry name" value="rSAM"/>
</dbReference>
<dbReference type="NCBIfam" id="TIGR00510">
    <property type="entry name" value="lipA"/>
    <property type="match status" value="1"/>
</dbReference>
<dbReference type="NCBIfam" id="NF004019">
    <property type="entry name" value="PRK05481.1"/>
    <property type="match status" value="1"/>
</dbReference>
<dbReference type="NCBIfam" id="NF009544">
    <property type="entry name" value="PRK12928.1"/>
    <property type="match status" value="1"/>
</dbReference>
<dbReference type="PANTHER" id="PTHR10949">
    <property type="entry name" value="LIPOYL SYNTHASE"/>
    <property type="match status" value="1"/>
</dbReference>
<dbReference type="PANTHER" id="PTHR10949:SF0">
    <property type="entry name" value="LIPOYL SYNTHASE, MITOCHONDRIAL"/>
    <property type="match status" value="1"/>
</dbReference>
<dbReference type="Pfam" id="PF16881">
    <property type="entry name" value="LIAS_N"/>
    <property type="match status" value="1"/>
</dbReference>
<dbReference type="Pfam" id="PF04055">
    <property type="entry name" value="Radical_SAM"/>
    <property type="match status" value="1"/>
</dbReference>
<dbReference type="PIRSF" id="PIRSF005963">
    <property type="entry name" value="Lipoyl_synth"/>
    <property type="match status" value="1"/>
</dbReference>
<dbReference type="SFLD" id="SFLDF00271">
    <property type="entry name" value="lipoyl_synthase"/>
    <property type="match status" value="1"/>
</dbReference>
<dbReference type="SFLD" id="SFLDG01058">
    <property type="entry name" value="lipoyl_synthase_like"/>
    <property type="match status" value="1"/>
</dbReference>
<dbReference type="SMART" id="SM00729">
    <property type="entry name" value="Elp3"/>
    <property type="match status" value="1"/>
</dbReference>
<dbReference type="SUPFAM" id="SSF102114">
    <property type="entry name" value="Radical SAM enzymes"/>
    <property type="match status" value="1"/>
</dbReference>
<dbReference type="PROSITE" id="PS51918">
    <property type="entry name" value="RADICAL_SAM"/>
    <property type="match status" value="1"/>
</dbReference>
<comment type="function">
    <text evidence="1">Catalyzes the radical-mediated insertion of two sulfur atoms into the C-6 and C-8 positions of the octanoyl moiety bound to the lipoyl domains of lipoate-dependent enzymes, thereby converting the octanoylated domains into lipoylated derivatives.</text>
</comment>
<comment type="catalytic activity">
    <reaction evidence="1">
        <text>[[Fe-S] cluster scaffold protein carrying a second [4Fe-4S](2+) cluster] + N(6)-octanoyl-L-lysyl-[protein] + 2 oxidized [2Fe-2S]-[ferredoxin] + 2 S-adenosyl-L-methionine + 4 H(+) = [[Fe-S] cluster scaffold protein] + N(6)-[(R)-dihydrolipoyl]-L-lysyl-[protein] + 4 Fe(3+) + 2 hydrogen sulfide + 2 5'-deoxyadenosine + 2 L-methionine + 2 reduced [2Fe-2S]-[ferredoxin]</text>
        <dbReference type="Rhea" id="RHEA:16585"/>
        <dbReference type="Rhea" id="RHEA-COMP:9928"/>
        <dbReference type="Rhea" id="RHEA-COMP:10000"/>
        <dbReference type="Rhea" id="RHEA-COMP:10001"/>
        <dbReference type="Rhea" id="RHEA-COMP:10475"/>
        <dbReference type="Rhea" id="RHEA-COMP:14568"/>
        <dbReference type="Rhea" id="RHEA-COMP:14569"/>
        <dbReference type="ChEBI" id="CHEBI:15378"/>
        <dbReference type="ChEBI" id="CHEBI:17319"/>
        <dbReference type="ChEBI" id="CHEBI:29034"/>
        <dbReference type="ChEBI" id="CHEBI:29919"/>
        <dbReference type="ChEBI" id="CHEBI:33722"/>
        <dbReference type="ChEBI" id="CHEBI:33737"/>
        <dbReference type="ChEBI" id="CHEBI:33738"/>
        <dbReference type="ChEBI" id="CHEBI:57844"/>
        <dbReference type="ChEBI" id="CHEBI:59789"/>
        <dbReference type="ChEBI" id="CHEBI:78809"/>
        <dbReference type="ChEBI" id="CHEBI:83100"/>
        <dbReference type="EC" id="2.8.1.8"/>
    </reaction>
</comment>
<comment type="cofactor">
    <cofactor evidence="1">
        <name>[4Fe-4S] cluster</name>
        <dbReference type="ChEBI" id="CHEBI:49883"/>
    </cofactor>
    <text evidence="1">Binds 2 [4Fe-4S] clusters per subunit. One cluster is coordinated with 3 cysteines and an exchangeable S-adenosyl-L-methionine.</text>
</comment>
<comment type="pathway">
    <text evidence="1">Protein modification; protein lipoylation via endogenous pathway; protein N(6)-(lipoyl)lysine from octanoyl-[acyl-carrier-protein]: step 2/2.</text>
</comment>
<comment type="subcellular location">
    <subcellularLocation>
        <location evidence="1">Cytoplasm</location>
    </subcellularLocation>
</comment>
<comment type="similarity">
    <text evidence="1">Belongs to the radical SAM superfamily. Lipoyl synthase family.</text>
</comment>
<reference key="1">
    <citation type="journal article" date="2009" name="PLoS Genet.">
        <title>The complete genome and proteome of Laribacter hongkongensis reveal potential mechanisms for adaptations to different temperatures and habitats.</title>
        <authorList>
            <person name="Woo P.C.Y."/>
            <person name="Lau S.K.P."/>
            <person name="Tse H."/>
            <person name="Teng J.L.L."/>
            <person name="Curreem S.O."/>
            <person name="Tsang A.K.L."/>
            <person name="Fan R.Y.Y."/>
            <person name="Wong G.K.M."/>
            <person name="Huang Y."/>
            <person name="Loman N.J."/>
            <person name="Snyder L.A.S."/>
            <person name="Cai J.J."/>
            <person name="Huang J.-D."/>
            <person name="Mak W."/>
            <person name="Pallen M.J."/>
            <person name="Lok S."/>
            <person name="Yuen K.-Y."/>
        </authorList>
    </citation>
    <scope>NUCLEOTIDE SEQUENCE [LARGE SCALE GENOMIC DNA]</scope>
    <source>
        <strain>HLHK9</strain>
    </source>
</reference>
<feature type="chain" id="PRO_1000124636" description="Lipoyl synthase">
    <location>
        <begin position="1"/>
        <end position="315"/>
    </location>
</feature>
<feature type="domain" description="Radical SAM core" evidence="2">
    <location>
        <begin position="75"/>
        <end position="292"/>
    </location>
</feature>
<feature type="binding site" evidence="1">
    <location>
        <position position="63"/>
    </location>
    <ligand>
        <name>[4Fe-4S] cluster</name>
        <dbReference type="ChEBI" id="CHEBI:49883"/>
        <label>1</label>
    </ligand>
</feature>
<feature type="binding site" evidence="1">
    <location>
        <position position="68"/>
    </location>
    <ligand>
        <name>[4Fe-4S] cluster</name>
        <dbReference type="ChEBI" id="CHEBI:49883"/>
        <label>1</label>
    </ligand>
</feature>
<feature type="binding site" evidence="1">
    <location>
        <position position="74"/>
    </location>
    <ligand>
        <name>[4Fe-4S] cluster</name>
        <dbReference type="ChEBI" id="CHEBI:49883"/>
        <label>1</label>
    </ligand>
</feature>
<feature type="binding site" evidence="1">
    <location>
        <position position="89"/>
    </location>
    <ligand>
        <name>[4Fe-4S] cluster</name>
        <dbReference type="ChEBI" id="CHEBI:49883"/>
        <label>2</label>
        <note>4Fe-4S-S-AdoMet</note>
    </ligand>
</feature>
<feature type="binding site" evidence="1">
    <location>
        <position position="93"/>
    </location>
    <ligand>
        <name>[4Fe-4S] cluster</name>
        <dbReference type="ChEBI" id="CHEBI:49883"/>
        <label>2</label>
        <note>4Fe-4S-S-AdoMet</note>
    </ligand>
</feature>
<feature type="binding site" evidence="1">
    <location>
        <position position="96"/>
    </location>
    <ligand>
        <name>[4Fe-4S] cluster</name>
        <dbReference type="ChEBI" id="CHEBI:49883"/>
        <label>2</label>
        <note>4Fe-4S-S-AdoMet</note>
    </ligand>
</feature>
<feature type="binding site" evidence="1">
    <location>
        <position position="303"/>
    </location>
    <ligand>
        <name>[4Fe-4S] cluster</name>
        <dbReference type="ChEBI" id="CHEBI:49883"/>
        <label>1</label>
    </ligand>
</feature>
<organism>
    <name type="scientific">Laribacter hongkongensis (strain HLHK9)</name>
    <dbReference type="NCBI Taxonomy" id="557598"/>
    <lineage>
        <taxon>Bacteria</taxon>
        <taxon>Pseudomonadati</taxon>
        <taxon>Pseudomonadota</taxon>
        <taxon>Betaproteobacteria</taxon>
        <taxon>Neisseriales</taxon>
        <taxon>Aquaspirillaceae</taxon>
        <taxon>Laribacter</taxon>
    </lineage>
</organism>
<name>LIPA_LARHH</name>
<accession>C1D5T3</accession>
<proteinExistence type="inferred from homology"/>
<keyword id="KW-0004">4Fe-4S</keyword>
<keyword id="KW-0963">Cytoplasm</keyword>
<keyword id="KW-0408">Iron</keyword>
<keyword id="KW-0411">Iron-sulfur</keyword>
<keyword id="KW-0479">Metal-binding</keyword>
<keyword id="KW-1185">Reference proteome</keyword>
<keyword id="KW-0949">S-adenosyl-L-methionine</keyword>
<keyword id="KW-0808">Transferase</keyword>
<gene>
    <name evidence="1" type="primary">lipA</name>
    <name type="ordered locus">LHK_00972</name>
</gene>
<evidence type="ECO:0000255" key="1">
    <source>
        <dbReference type="HAMAP-Rule" id="MF_00206"/>
    </source>
</evidence>
<evidence type="ECO:0000255" key="2">
    <source>
        <dbReference type="PROSITE-ProRule" id="PRU01266"/>
    </source>
</evidence>
<sequence length="315" mass="35334">MKQDNQTGIKHKGEAKTARIPIKVVPLEEKLRKPEWIRAKLPTGQRFFEIKEILRNQKLHTVCEEASCPNIGECFSHGTATFMIMGDICTRRCPFCDVGHGRPNPLDPNEPQHLAESVAAMRLKYVVITSVDRDDLRDGGAQHFADCIQAIRASSPATRIEVLVPDFRGRLELALDILSATPPDVMNHNLETAPRLYKQARPGADYAHSLQLLKDYKTRNPDVTTKSGIMVGLGETDEEVLEVLADLRAHDVDMLTIGQYLQPSNGHLPVLRYVTPDQFKAFEKKAYDMGFRHAAVGAMVRSSYHADQQAREVIE</sequence>
<protein>
    <recommendedName>
        <fullName evidence="1">Lipoyl synthase</fullName>
        <ecNumber evidence="1">2.8.1.8</ecNumber>
    </recommendedName>
    <alternativeName>
        <fullName evidence="1">Lip-syn</fullName>
        <shortName evidence="1">LS</shortName>
    </alternativeName>
    <alternativeName>
        <fullName evidence="1">Lipoate synthase</fullName>
    </alternativeName>
    <alternativeName>
        <fullName evidence="1">Lipoic acid synthase</fullName>
    </alternativeName>
    <alternativeName>
        <fullName evidence="1">Sulfur insertion protein LipA</fullName>
    </alternativeName>
</protein>